<reference key="1">
    <citation type="journal article" date="2002" name="Nat. Biotechnol.">
        <title>Genome sequence of the dissimilatory metal ion-reducing bacterium Shewanella oneidensis.</title>
        <authorList>
            <person name="Heidelberg J.F."/>
            <person name="Paulsen I.T."/>
            <person name="Nelson K.E."/>
            <person name="Gaidos E.J."/>
            <person name="Nelson W.C."/>
            <person name="Read T.D."/>
            <person name="Eisen J.A."/>
            <person name="Seshadri R."/>
            <person name="Ward N.L."/>
            <person name="Methe B.A."/>
            <person name="Clayton R.A."/>
            <person name="Meyer T."/>
            <person name="Tsapin A."/>
            <person name="Scott J."/>
            <person name="Beanan M.J."/>
            <person name="Brinkac L.M."/>
            <person name="Daugherty S.C."/>
            <person name="DeBoy R.T."/>
            <person name="Dodson R.J."/>
            <person name="Durkin A.S."/>
            <person name="Haft D.H."/>
            <person name="Kolonay J.F."/>
            <person name="Madupu R."/>
            <person name="Peterson J.D."/>
            <person name="Umayam L.A."/>
            <person name="White O."/>
            <person name="Wolf A.M."/>
            <person name="Vamathevan J.J."/>
            <person name="Weidman J.F."/>
            <person name="Impraim M."/>
            <person name="Lee K."/>
            <person name="Berry K.J."/>
            <person name="Lee C."/>
            <person name="Mueller J."/>
            <person name="Khouri H.M."/>
            <person name="Gill J."/>
            <person name="Utterback T.R."/>
            <person name="McDonald L.A."/>
            <person name="Feldblyum T.V."/>
            <person name="Smith H.O."/>
            <person name="Venter J.C."/>
            <person name="Nealson K.H."/>
            <person name="Fraser C.M."/>
        </authorList>
    </citation>
    <scope>NUCLEOTIDE SEQUENCE [LARGE SCALE GENOMIC DNA]</scope>
    <source>
        <strain>ATCC 700550 / JCM 31522 / CIP 106686 / LMG 19005 / NCIMB 14063 / MR-1</strain>
    </source>
</reference>
<dbReference type="EC" id="2.4.2.1" evidence="2"/>
<dbReference type="EMBL" id="AE014299">
    <property type="protein sequence ID" value="AAN55747.1"/>
    <property type="molecule type" value="Genomic_DNA"/>
</dbReference>
<dbReference type="RefSeq" id="NP_718303.1">
    <property type="nucleotide sequence ID" value="NC_004347.2"/>
</dbReference>
<dbReference type="PDB" id="4LKR">
    <property type="method" value="X-ray"/>
    <property type="resolution" value="2.40 A"/>
    <property type="chains" value="A=1-234"/>
</dbReference>
<dbReference type="PDBsum" id="4LKR"/>
<dbReference type="SMR" id="Q8EDM4"/>
<dbReference type="STRING" id="211586.SO_2719"/>
<dbReference type="PaxDb" id="211586-SO_2719"/>
<dbReference type="KEGG" id="son:SO_2719"/>
<dbReference type="PATRIC" id="fig|211586.12.peg.2619"/>
<dbReference type="eggNOG" id="COG0813">
    <property type="taxonomic scope" value="Bacteria"/>
</dbReference>
<dbReference type="HOGENOM" id="CLU_068457_2_0_6"/>
<dbReference type="OrthoDB" id="9782889at2"/>
<dbReference type="PhylomeDB" id="Q8EDM4"/>
<dbReference type="BioCyc" id="SONE211586:G1GMP-2501-MONOMER"/>
<dbReference type="EvolutionaryTrace" id="Q8EDM4"/>
<dbReference type="Proteomes" id="UP000008186">
    <property type="component" value="Chromosome"/>
</dbReference>
<dbReference type="GO" id="GO:0005829">
    <property type="term" value="C:cytosol"/>
    <property type="evidence" value="ECO:0000318"/>
    <property type="project" value="GO_Central"/>
</dbReference>
<dbReference type="GO" id="GO:0004731">
    <property type="term" value="F:purine-nucleoside phosphorylase activity"/>
    <property type="evidence" value="ECO:0000318"/>
    <property type="project" value="GO_Central"/>
</dbReference>
<dbReference type="GO" id="GO:0006152">
    <property type="term" value="P:purine nucleoside catabolic process"/>
    <property type="evidence" value="ECO:0000318"/>
    <property type="project" value="GO_Central"/>
</dbReference>
<dbReference type="CDD" id="cd09006">
    <property type="entry name" value="PNP_EcPNPI-like"/>
    <property type="match status" value="1"/>
</dbReference>
<dbReference type="Gene3D" id="3.40.50.1580">
    <property type="entry name" value="Nucleoside phosphorylase domain"/>
    <property type="match status" value="1"/>
</dbReference>
<dbReference type="HAMAP" id="MF_01627">
    <property type="entry name" value="Pur_nucleosid_phosp"/>
    <property type="match status" value="1"/>
</dbReference>
<dbReference type="InterPro" id="IPR004402">
    <property type="entry name" value="DeoD-type"/>
</dbReference>
<dbReference type="InterPro" id="IPR000845">
    <property type="entry name" value="Nucleoside_phosphorylase_d"/>
</dbReference>
<dbReference type="InterPro" id="IPR035994">
    <property type="entry name" value="Nucleoside_phosphorylase_sf"/>
</dbReference>
<dbReference type="NCBIfam" id="TIGR00107">
    <property type="entry name" value="deoD"/>
    <property type="match status" value="1"/>
</dbReference>
<dbReference type="NCBIfam" id="NF004489">
    <property type="entry name" value="PRK05819.1"/>
    <property type="match status" value="1"/>
</dbReference>
<dbReference type="NCBIfam" id="NF009914">
    <property type="entry name" value="PRK13374.1"/>
    <property type="match status" value="1"/>
</dbReference>
<dbReference type="PANTHER" id="PTHR43691:SF2">
    <property type="entry name" value="PURINE NUCLEOSIDE PHOSPHORYLASE DEOD-TYPE"/>
    <property type="match status" value="1"/>
</dbReference>
<dbReference type="PANTHER" id="PTHR43691">
    <property type="entry name" value="URIDINE PHOSPHORYLASE"/>
    <property type="match status" value="1"/>
</dbReference>
<dbReference type="Pfam" id="PF01048">
    <property type="entry name" value="PNP_UDP_1"/>
    <property type="match status" value="1"/>
</dbReference>
<dbReference type="SUPFAM" id="SSF53167">
    <property type="entry name" value="Purine and uridine phosphorylases"/>
    <property type="match status" value="1"/>
</dbReference>
<comment type="function">
    <text evidence="2">Catalyzes the reversible phosphorolytic breakdown of the N-glycosidic bond in the beta-(deoxy)ribonucleoside molecules, with the formation of the corresponding free purine bases and pentose-1-phosphate.</text>
</comment>
<comment type="catalytic activity">
    <reaction evidence="2">
        <text>a purine D-ribonucleoside + phosphate = a purine nucleobase + alpha-D-ribose 1-phosphate</text>
        <dbReference type="Rhea" id="RHEA:19805"/>
        <dbReference type="ChEBI" id="CHEBI:26386"/>
        <dbReference type="ChEBI" id="CHEBI:43474"/>
        <dbReference type="ChEBI" id="CHEBI:57720"/>
        <dbReference type="ChEBI" id="CHEBI:142355"/>
        <dbReference type="EC" id="2.4.2.1"/>
    </reaction>
</comment>
<comment type="catalytic activity">
    <reaction evidence="2">
        <text>a purine 2'-deoxy-D-ribonucleoside + phosphate = a purine nucleobase + 2-deoxy-alpha-D-ribose 1-phosphate</text>
        <dbReference type="Rhea" id="RHEA:36431"/>
        <dbReference type="ChEBI" id="CHEBI:26386"/>
        <dbReference type="ChEBI" id="CHEBI:43474"/>
        <dbReference type="ChEBI" id="CHEBI:57259"/>
        <dbReference type="ChEBI" id="CHEBI:142361"/>
        <dbReference type="EC" id="2.4.2.1"/>
    </reaction>
</comment>
<comment type="subunit">
    <text evidence="2">Homohexamer; trimer of homodimers.</text>
</comment>
<comment type="similarity">
    <text evidence="2">Belongs to the PNP/UDP phosphorylase family.</text>
</comment>
<proteinExistence type="evidence at protein level"/>
<accession>Q8EDM4</accession>
<organism>
    <name type="scientific">Shewanella oneidensis (strain ATCC 700550 / JCM 31522 / CIP 106686 / LMG 19005 / NCIMB 14063 / MR-1)</name>
    <dbReference type="NCBI Taxonomy" id="211586"/>
    <lineage>
        <taxon>Bacteria</taxon>
        <taxon>Pseudomonadati</taxon>
        <taxon>Pseudomonadota</taxon>
        <taxon>Gammaproteobacteria</taxon>
        <taxon>Alteromonadales</taxon>
        <taxon>Shewanellaceae</taxon>
        <taxon>Shewanella</taxon>
    </lineage>
</organism>
<feature type="chain" id="PRO_0000063161" description="Purine nucleoside phosphorylase DeoD-type">
    <location>
        <begin position="1"/>
        <end position="234"/>
    </location>
</feature>
<feature type="active site" description="Proton donor" evidence="2">
    <location>
        <position position="204"/>
    </location>
</feature>
<feature type="binding site" evidence="1">
    <location>
        <position position="4"/>
    </location>
    <ligand>
        <name>a purine D-ribonucleoside</name>
        <dbReference type="ChEBI" id="CHEBI:142355"/>
        <note>ligand shared between dimeric partners</note>
    </ligand>
</feature>
<feature type="binding site" description="in other chain" evidence="1">
    <location>
        <position position="20"/>
    </location>
    <ligand>
        <name>phosphate</name>
        <dbReference type="ChEBI" id="CHEBI:43474"/>
        <note>ligand shared between dimeric partners</note>
    </ligand>
</feature>
<feature type="binding site" description="in other chain" evidence="1">
    <location>
        <position position="24"/>
    </location>
    <ligand>
        <name>phosphate</name>
        <dbReference type="ChEBI" id="CHEBI:43474"/>
        <note>ligand shared between dimeric partners</note>
    </ligand>
</feature>
<feature type="binding site" evidence="1">
    <location>
        <position position="43"/>
    </location>
    <ligand>
        <name>phosphate</name>
        <dbReference type="ChEBI" id="CHEBI:43474"/>
        <note>ligand shared between dimeric partners</note>
    </ligand>
</feature>
<feature type="binding site" description="in other chain" evidence="1">
    <location>
        <begin position="87"/>
        <end position="90"/>
    </location>
    <ligand>
        <name>phosphate</name>
        <dbReference type="ChEBI" id="CHEBI:43474"/>
        <note>ligand shared between dimeric partners</note>
    </ligand>
</feature>
<feature type="binding site" description="in other chain" evidence="1">
    <location>
        <begin position="179"/>
        <end position="181"/>
    </location>
    <ligand>
        <name>a purine D-ribonucleoside</name>
        <dbReference type="ChEBI" id="CHEBI:142355"/>
        <note>ligand shared between dimeric partners</note>
    </ligand>
</feature>
<feature type="binding site" description="in other chain" evidence="1">
    <location>
        <begin position="203"/>
        <end position="204"/>
    </location>
    <ligand>
        <name>a purine D-ribonucleoside</name>
        <dbReference type="ChEBI" id="CHEBI:142355"/>
        <note>ligand shared between dimeric partners</note>
    </ligand>
</feature>
<feature type="site" description="Important for catalytic activity" evidence="2">
    <location>
        <position position="217"/>
    </location>
</feature>
<feature type="strand" evidence="3">
    <location>
        <begin position="14"/>
        <end position="18"/>
    </location>
</feature>
<feature type="helix" evidence="3">
    <location>
        <begin position="22"/>
        <end position="31"/>
    </location>
</feature>
<feature type="strand" evidence="3">
    <location>
        <begin position="34"/>
        <end position="40"/>
    </location>
</feature>
<feature type="helix" evidence="3">
    <location>
        <begin position="42"/>
        <end position="44"/>
    </location>
</feature>
<feature type="strand" evidence="3">
    <location>
        <begin position="47"/>
        <end position="52"/>
    </location>
</feature>
<feature type="strand" evidence="3">
    <location>
        <begin position="55"/>
        <end position="60"/>
    </location>
</feature>
<feature type="helix" evidence="3">
    <location>
        <begin position="66"/>
        <end position="79"/>
    </location>
</feature>
<feature type="strand" evidence="3">
    <location>
        <begin position="84"/>
        <end position="93"/>
    </location>
</feature>
<feature type="strand" evidence="3">
    <location>
        <begin position="103"/>
        <end position="112"/>
    </location>
</feature>
<feature type="helix" evidence="3">
    <location>
        <begin position="115"/>
        <end position="119"/>
    </location>
</feature>
<feature type="turn" evidence="3">
    <location>
        <begin position="120"/>
        <end position="122"/>
    </location>
</feature>
<feature type="helix" evidence="3">
    <location>
        <begin position="131"/>
        <end position="143"/>
    </location>
</feature>
<feature type="strand" evidence="3">
    <location>
        <begin position="148"/>
        <end position="155"/>
    </location>
</feature>
<feature type="helix" evidence="3">
    <location>
        <begin position="166"/>
        <end position="172"/>
    </location>
</feature>
<feature type="strand" evidence="3">
    <location>
        <begin position="177"/>
        <end position="181"/>
    </location>
</feature>
<feature type="helix" evidence="3">
    <location>
        <begin position="182"/>
        <end position="192"/>
    </location>
</feature>
<feature type="strand" evidence="3">
    <location>
        <begin position="195"/>
        <end position="205"/>
    </location>
</feature>
<feature type="turn" evidence="3">
    <location>
        <begin position="206"/>
        <end position="208"/>
    </location>
</feature>
<feature type="helix" evidence="3">
    <location>
        <begin position="214"/>
        <end position="232"/>
    </location>
</feature>
<protein>
    <recommendedName>
        <fullName evidence="2">Purine nucleoside phosphorylase DeoD-type</fullName>
        <shortName evidence="2">PNP</shortName>
        <ecNumber evidence="2">2.4.2.1</ecNumber>
    </recommendedName>
</protein>
<name>DEOD3_SHEON</name>
<keyword id="KW-0002">3D-structure</keyword>
<keyword id="KW-0328">Glycosyltransferase</keyword>
<keyword id="KW-1185">Reference proteome</keyword>
<keyword id="KW-0808">Transferase</keyword>
<gene>
    <name evidence="2" type="primary">deoD3</name>
    <name type="ordered locus">SO_2719</name>
</gene>
<evidence type="ECO:0000250" key="1">
    <source>
        <dbReference type="UniProtKB" id="P50389"/>
    </source>
</evidence>
<evidence type="ECO:0000255" key="2">
    <source>
        <dbReference type="HAMAP-Rule" id="MF_01627"/>
    </source>
</evidence>
<evidence type="ECO:0007829" key="3">
    <source>
        <dbReference type="PDB" id="4LKR"/>
    </source>
</evidence>
<sequence length="234" mass="25529">MTAHINAQPTDFAETVIMPGDPLRAKYIAETYLTDAVEVTNVRNMLGYTGYYQGQRISVMGHGMGISSMVLYGHELINFFGVKRIIRIGSLGATQQHVEMRDVILAQAAGTDSPTNAKRSSGYHMATSATFSLLHKAYTKANEKGISVKVGNVFSGDLYYDPDEDMIPALERFGVLGIDMEVAGLYGLAHQQGIESLAILTVSDHCLTGEETTAQERQLSFNNMIELALETALN</sequence>